<comment type="catalytic activity">
    <reaction evidence="1">
        <text>CMP + ATP = CDP + ADP</text>
        <dbReference type="Rhea" id="RHEA:11600"/>
        <dbReference type="ChEBI" id="CHEBI:30616"/>
        <dbReference type="ChEBI" id="CHEBI:58069"/>
        <dbReference type="ChEBI" id="CHEBI:60377"/>
        <dbReference type="ChEBI" id="CHEBI:456216"/>
        <dbReference type="EC" id="2.7.4.25"/>
    </reaction>
</comment>
<comment type="catalytic activity">
    <reaction evidence="1">
        <text>dCMP + ATP = dCDP + ADP</text>
        <dbReference type="Rhea" id="RHEA:25094"/>
        <dbReference type="ChEBI" id="CHEBI:30616"/>
        <dbReference type="ChEBI" id="CHEBI:57566"/>
        <dbReference type="ChEBI" id="CHEBI:58593"/>
        <dbReference type="ChEBI" id="CHEBI:456216"/>
        <dbReference type="EC" id="2.7.4.25"/>
    </reaction>
</comment>
<comment type="subcellular location">
    <subcellularLocation>
        <location evidence="1">Cytoplasm</location>
    </subcellularLocation>
</comment>
<comment type="similarity">
    <text evidence="1">Belongs to the cytidylate kinase family. Type 1 subfamily.</text>
</comment>
<reference key="1">
    <citation type="journal article" date="2001" name="Proc. Natl. Acad. Sci. U.S.A.">
        <title>Complete genomic sequence of Pasteurella multocida Pm70.</title>
        <authorList>
            <person name="May B.J."/>
            <person name="Zhang Q."/>
            <person name="Li L.L."/>
            <person name="Paustian M.L."/>
            <person name="Whittam T.S."/>
            <person name="Kapur V."/>
        </authorList>
    </citation>
    <scope>NUCLEOTIDE SEQUENCE [LARGE SCALE GENOMIC DNA]</scope>
    <source>
        <strain>Pm70</strain>
    </source>
</reference>
<accession>P57875</accession>
<proteinExistence type="inferred from homology"/>
<evidence type="ECO:0000255" key="1">
    <source>
        <dbReference type="HAMAP-Rule" id="MF_00238"/>
    </source>
</evidence>
<name>KCY_PASMU</name>
<organism>
    <name type="scientific">Pasteurella multocida (strain Pm70)</name>
    <dbReference type="NCBI Taxonomy" id="272843"/>
    <lineage>
        <taxon>Bacteria</taxon>
        <taxon>Pseudomonadati</taxon>
        <taxon>Pseudomonadota</taxon>
        <taxon>Gammaproteobacteria</taxon>
        <taxon>Pasteurellales</taxon>
        <taxon>Pasteurellaceae</taxon>
        <taxon>Pasteurella</taxon>
    </lineage>
</organism>
<sequence>MSNKIVITVDGPSGAGKGTLCYALAEKLGFTLLDSGAIYRVTALAALKSAVELDDEIALAALASALDVQFLPADGEVKILLNGENVSGQIRTQEVAEAASKVAVFPEVRKALLQRQQDFSTENGLIADGRDMGTVVFPNAQVKLFLDASAEERAKRRYKQLQNKGISGNFDQILAEIKARDFRDRNRAVAPLKPAEDALILDSTSLSIEEVIAQALSYIQQHLDIKA</sequence>
<keyword id="KW-0067">ATP-binding</keyword>
<keyword id="KW-0963">Cytoplasm</keyword>
<keyword id="KW-0418">Kinase</keyword>
<keyword id="KW-0547">Nucleotide-binding</keyword>
<keyword id="KW-1185">Reference proteome</keyword>
<keyword id="KW-0808">Transferase</keyword>
<protein>
    <recommendedName>
        <fullName evidence="1">Cytidylate kinase</fullName>
        <shortName evidence="1">CK</shortName>
        <ecNumber evidence="1">2.7.4.25</ecNumber>
    </recommendedName>
    <alternativeName>
        <fullName evidence="1">Cytidine monophosphate kinase</fullName>
        <shortName evidence="1">CMP kinase</shortName>
    </alternativeName>
</protein>
<feature type="chain" id="PRO_0000131951" description="Cytidylate kinase">
    <location>
        <begin position="1"/>
        <end position="227"/>
    </location>
</feature>
<feature type="binding site" evidence="1">
    <location>
        <begin position="11"/>
        <end position="19"/>
    </location>
    <ligand>
        <name>ATP</name>
        <dbReference type="ChEBI" id="CHEBI:30616"/>
    </ligand>
</feature>
<gene>
    <name evidence="1" type="primary">cmk</name>
    <name type="synonym">cmkA</name>
    <name type="ordered locus">PM0802</name>
</gene>
<dbReference type="EC" id="2.7.4.25" evidence="1"/>
<dbReference type="EMBL" id="AE004439">
    <property type="protein sequence ID" value="AAK02886.1"/>
    <property type="molecule type" value="Genomic_DNA"/>
</dbReference>
<dbReference type="RefSeq" id="WP_005722464.1">
    <property type="nucleotide sequence ID" value="NC_002663.1"/>
</dbReference>
<dbReference type="SMR" id="P57875"/>
<dbReference type="STRING" id="272843.PM0802"/>
<dbReference type="EnsemblBacteria" id="AAK02886">
    <property type="protein sequence ID" value="AAK02886"/>
    <property type="gene ID" value="PM0802"/>
</dbReference>
<dbReference type="GeneID" id="77207769"/>
<dbReference type="KEGG" id="pmu:PM0802"/>
<dbReference type="HOGENOM" id="CLU_079959_0_2_6"/>
<dbReference type="OrthoDB" id="9807434at2"/>
<dbReference type="Proteomes" id="UP000000809">
    <property type="component" value="Chromosome"/>
</dbReference>
<dbReference type="GO" id="GO:0005829">
    <property type="term" value="C:cytosol"/>
    <property type="evidence" value="ECO:0007669"/>
    <property type="project" value="TreeGrafter"/>
</dbReference>
<dbReference type="GO" id="GO:0005524">
    <property type="term" value="F:ATP binding"/>
    <property type="evidence" value="ECO:0007669"/>
    <property type="project" value="UniProtKB-UniRule"/>
</dbReference>
<dbReference type="GO" id="GO:0036430">
    <property type="term" value="F:CMP kinase activity"/>
    <property type="evidence" value="ECO:0007669"/>
    <property type="project" value="RHEA"/>
</dbReference>
<dbReference type="GO" id="GO:0036431">
    <property type="term" value="F:dCMP kinase activity"/>
    <property type="evidence" value="ECO:0007669"/>
    <property type="project" value="RHEA"/>
</dbReference>
<dbReference type="GO" id="GO:0015949">
    <property type="term" value="P:nucleobase-containing small molecule interconversion"/>
    <property type="evidence" value="ECO:0007669"/>
    <property type="project" value="TreeGrafter"/>
</dbReference>
<dbReference type="GO" id="GO:0006220">
    <property type="term" value="P:pyrimidine nucleotide metabolic process"/>
    <property type="evidence" value="ECO:0007669"/>
    <property type="project" value="UniProtKB-UniRule"/>
</dbReference>
<dbReference type="CDD" id="cd02020">
    <property type="entry name" value="CMPK"/>
    <property type="match status" value="1"/>
</dbReference>
<dbReference type="FunFam" id="3.40.50.300:FF:000262">
    <property type="entry name" value="Cytidylate kinase"/>
    <property type="match status" value="1"/>
</dbReference>
<dbReference type="Gene3D" id="3.40.50.300">
    <property type="entry name" value="P-loop containing nucleotide triphosphate hydrolases"/>
    <property type="match status" value="1"/>
</dbReference>
<dbReference type="HAMAP" id="MF_00238">
    <property type="entry name" value="Cytidyl_kinase_type1"/>
    <property type="match status" value="1"/>
</dbReference>
<dbReference type="InterPro" id="IPR003136">
    <property type="entry name" value="Cytidylate_kin"/>
</dbReference>
<dbReference type="InterPro" id="IPR011994">
    <property type="entry name" value="Cytidylate_kinase_dom"/>
</dbReference>
<dbReference type="InterPro" id="IPR027417">
    <property type="entry name" value="P-loop_NTPase"/>
</dbReference>
<dbReference type="NCBIfam" id="TIGR00017">
    <property type="entry name" value="cmk"/>
    <property type="match status" value="1"/>
</dbReference>
<dbReference type="PANTHER" id="PTHR21299:SF2">
    <property type="entry name" value="CYTIDYLATE KINASE"/>
    <property type="match status" value="1"/>
</dbReference>
<dbReference type="PANTHER" id="PTHR21299">
    <property type="entry name" value="CYTIDYLATE KINASE/PANTOATE-BETA-ALANINE LIGASE"/>
    <property type="match status" value="1"/>
</dbReference>
<dbReference type="Pfam" id="PF02224">
    <property type="entry name" value="Cytidylate_kin"/>
    <property type="match status" value="1"/>
</dbReference>
<dbReference type="SUPFAM" id="SSF52540">
    <property type="entry name" value="P-loop containing nucleoside triphosphate hydrolases"/>
    <property type="match status" value="1"/>
</dbReference>